<keyword id="KW-0507">mRNA processing</keyword>
<keyword id="KW-0539">Nucleus</keyword>
<keyword id="KW-1185">Reference proteome</keyword>
<keyword id="KW-0694">RNA-binding</keyword>
<sequence length="843" mass="95616">MTSIIKLKVFSGAKDEGPLCYLLQVDGDYILLDCGWDERFGLQYFEELKPFIPKISAVLISHPDPLHLGGLPYLVSKCGLTAPVYATVPVYKMGQMFIYDMVYSHLDVEEFEHYTLDDVDTAFEKVEQVKYNQTVVLKGDSGVHFTALPAGHMLGGSIWRICRVTGEDIVYCVDFNHKKERHLNGCSFDNFNRPHLLITGAHHISLPQMRRKDRDEQLVTKILRTVRQKGDCMIVIDTAGRVLELAHLLDQLWSNADAGLSTYNLVMMSHVASSVVQFAKSQLEWMNEKLFKYDSSSARYNPFTLKHVTLCHSHQELMRVRSPKVVLCSSQDMESGFSRELFLDWCSDPRNGVILTARPASFTLAAKLVNMAERANDGVLKHEDRLISLVVKKRVALEGEELLEYKRRKAERDAEETRLRMERARRQAQANESDDSDDDDIAAPIVPRHSEKDFRSFDGSENDAHTFDIMAKWDNQQKASFFKTTKKSFPMFPYIEEKVKWDDYGEVIKPEDYTVISKIDLRKGQNKDEPVVVKKREEEEEVYNPNDHVEEMPTKCVEFKNRVEVSCRIEFIEYEGISDGESTKKLLAGLLPRQIIVVHGSRDDTRDLVAYFADSGFDTTMLKAPEAGALVDASVESFIYQVALSDALLADIQFKEVSEGNSLAWIDARVMEKEAIDNMLAVGTSNLMIDDKNREEDVNDQEENGATEGEGNAEPMEIGENGSQESLAISESGKEVENGHTNDSRTKKGTKGKIRGNLILDPLPKRLIPIHQAVFVNDPKLSDFKNLLTDKGYKAEFLSGTLLINGGNCSIRRNDTGVFQMEGAFTKDYYKLRRLFYDQFAVL</sequence>
<evidence type="ECO:0000250" key="1"/>
<evidence type="ECO:0000256" key="2">
    <source>
        <dbReference type="SAM" id="MobiDB-lite"/>
    </source>
</evidence>
<evidence type="ECO:0000269" key="3">
    <source>
    </source>
</evidence>
<evidence type="ECO:0000305" key="4"/>
<name>CPSF2_CAEEL</name>
<accession>O17403</accession>
<proteinExistence type="inferred from homology"/>
<protein>
    <recommendedName>
        <fullName>Probable cleavage and polyadenylation specificity factor subunit 2</fullName>
    </recommendedName>
    <alternativeName>
        <fullName>Cleavage and polyadenylation specificity factor 100 kDa subunit</fullName>
        <shortName>CPSF 100 kDa subunit</shortName>
    </alternativeName>
</protein>
<reference key="1">
    <citation type="journal article" date="1998" name="Science">
        <title>Genome sequence of the nematode C. elegans: a platform for investigating biology.</title>
        <authorList>
            <consortium name="The C. elegans sequencing consortium"/>
        </authorList>
    </citation>
    <scope>NUCLEOTIDE SEQUENCE [LARGE SCALE GENOMIC DNA]</scope>
    <source>
        <strain>Bristol N2</strain>
    </source>
</reference>
<reference key="2">
    <citation type="journal article" date="2005" name="Science">
        <title>Functional genomic analysis of RNA interference in C. elegans.</title>
        <authorList>
            <person name="Kim J.K."/>
            <person name="Gabel H.W."/>
            <person name="Kamath R.S."/>
            <person name="Tewari M."/>
            <person name="Pasquinelli A."/>
            <person name="Rual J.F."/>
            <person name="Kennedy S."/>
            <person name="Dybbs M."/>
            <person name="Bertin N."/>
            <person name="Kaplan J.M."/>
            <person name="Vidal M."/>
            <person name="Ruvkun G."/>
        </authorList>
    </citation>
    <scope>FUNCTION</scope>
</reference>
<gene>
    <name type="primary">cpsf-2</name>
    <name type="ORF">F09G2.4</name>
</gene>
<comment type="function">
    <text evidence="3">CPSF plays a key role in pre-mRNA 3'-end formation, recognizing the AAUAAA signal sequence and interacting with poly(A)polymerase and other factors to bring about cleavage and poly(A) addition.</text>
</comment>
<comment type="subunit">
    <text evidence="1">CPSF is a heterotetramer composed of four distinct subunits 160, 100, 70 and 30 kDa.</text>
</comment>
<comment type="subcellular location">
    <subcellularLocation>
        <location evidence="4">Nucleus</location>
    </subcellularLocation>
</comment>
<comment type="similarity">
    <text evidence="4">Belongs to the metallo-beta-lactamase superfamily. RNA-metabolizing metallo-beta-lactamase-like family. CPSF2/YSH1 subfamily.</text>
</comment>
<organism>
    <name type="scientific">Caenorhabditis elegans</name>
    <dbReference type="NCBI Taxonomy" id="6239"/>
    <lineage>
        <taxon>Eukaryota</taxon>
        <taxon>Metazoa</taxon>
        <taxon>Ecdysozoa</taxon>
        <taxon>Nematoda</taxon>
        <taxon>Chromadorea</taxon>
        <taxon>Rhabditida</taxon>
        <taxon>Rhabditina</taxon>
        <taxon>Rhabditomorpha</taxon>
        <taxon>Rhabditoidea</taxon>
        <taxon>Rhabditidae</taxon>
        <taxon>Peloderinae</taxon>
        <taxon>Caenorhabditis</taxon>
    </lineage>
</organism>
<dbReference type="EMBL" id="FO080529">
    <property type="protein sequence ID" value="CCD64424.1"/>
    <property type="molecule type" value="Genomic_DNA"/>
</dbReference>
<dbReference type="PIR" id="T32487">
    <property type="entry name" value="T32487"/>
</dbReference>
<dbReference type="RefSeq" id="NP_504822.1">
    <property type="nucleotide sequence ID" value="NM_072421.5"/>
</dbReference>
<dbReference type="SMR" id="O17403"/>
<dbReference type="BioGRID" id="44148">
    <property type="interactions" value="7"/>
</dbReference>
<dbReference type="FunCoup" id="O17403">
    <property type="interactions" value="3350"/>
</dbReference>
<dbReference type="STRING" id="6239.F09G2.4.1"/>
<dbReference type="iPTMnet" id="O17403"/>
<dbReference type="PaxDb" id="6239-F09G2.4"/>
<dbReference type="PeptideAtlas" id="O17403"/>
<dbReference type="EnsemblMetazoa" id="F09G2.4.1">
    <property type="protein sequence ID" value="F09G2.4.1"/>
    <property type="gene ID" value="WBGene00017313"/>
</dbReference>
<dbReference type="GeneID" id="179103"/>
<dbReference type="KEGG" id="cel:CELE_F09G2.4"/>
<dbReference type="AGR" id="WB:WBGene00017313"/>
<dbReference type="CTD" id="179103"/>
<dbReference type="WormBase" id="F09G2.4">
    <property type="protein sequence ID" value="CE09299"/>
    <property type="gene ID" value="WBGene00017313"/>
    <property type="gene designation" value="cpsf-2"/>
</dbReference>
<dbReference type="eggNOG" id="KOG1135">
    <property type="taxonomic scope" value="Eukaryota"/>
</dbReference>
<dbReference type="GeneTree" id="ENSGT00910000144260"/>
<dbReference type="HOGENOM" id="CLU_002227_3_0_1"/>
<dbReference type="InParanoid" id="O17403"/>
<dbReference type="OMA" id="QSRHNME"/>
<dbReference type="OrthoDB" id="64353at2759"/>
<dbReference type="PhylomeDB" id="O17403"/>
<dbReference type="Reactome" id="R-CEL-72187">
    <property type="pathway name" value="mRNA 3'-end processing"/>
</dbReference>
<dbReference type="Reactome" id="R-CEL-72203">
    <property type="pathway name" value="Processing of Capped Intron-Containing Pre-mRNA"/>
</dbReference>
<dbReference type="Reactome" id="R-CEL-73856">
    <property type="pathway name" value="RNA Polymerase II Transcription Termination"/>
</dbReference>
<dbReference type="Reactome" id="R-CEL-77595">
    <property type="pathway name" value="Processing of Intronless Pre-mRNAs"/>
</dbReference>
<dbReference type="PRO" id="PR:O17403"/>
<dbReference type="Proteomes" id="UP000001940">
    <property type="component" value="Chromosome V"/>
</dbReference>
<dbReference type="Bgee" id="WBGene00017313">
    <property type="expression patterns" value="Expressed in germ line (C elegans) and 4 other cell types or tissues"/>
</dbReference>
<dbReference type="GO" id="GO:0005847">
    <property type="term" value="C:mRNA cleavage and polyadenylation specificity factor complex"/>
    <property type="evidence" value="ECO:0000250"/>
    <property type="project" value="WormBase"/>
</dbReference>
<dbReference type="GO" id="GO:0003723">
    <property type="term" value="F:RNA binding"/>
    <property type="evidence" value="ECO:0000250"/>
    <property type="project" value="WormBase"/>
</dbReference>
<dbReference type="GO" id="GO:0031124">
    <property type="term" value="P:mRNA 3'-end processing"/>
    <property type="evidence" value="ECO:0000250"/>
    <property type="project" value="WormBase"/>
</dbReference>
<dbReference type="GO" id="GO:0006398">
    <property type="term" value="P:mRNA 3'-end processing by stem-loop binding and cleavage"/>
    <property type="evidence" value="ECO:0000318"/>
    <property type="project" value="GO_Central"/>
</dbReference>
<dbReference type="CDD" id="cd16293">
    <property type="entry name" value="CPSF2-like_MBL-fold"/>
    <property type="match status" value="1"/>
</dbReference>
<dbReference type="FunFam" id="3.60.15.10:FF:000008">
    <property type="entry name" value="Cleavage and polyadenylation specificity factor subunit 2"/>
    <property type="match status" value="1"/>
</dbReference>
<dbReference type="Gene3D" id="3.60.15.10">
    <property type="entry name" value="Ribonuclease Z/Hydroxyacylglutathione hydrolase-like"/>
    <property type="match status" value="1"/>
</dbReference>
<dbReference type="InterPro" id="IPR022712">
    <property type="entry name" value="Beta_Casp"/>
</dbReference>
<dbReference type="InterPro" id="IPR027075">
    <property type="entry name" value="CPSF2"/>
</dbReference>
<dbReference type="InterPro" id="IPR025069">
    <property type="entry name" value="Cpsf2_C"/>
</dbReference>
<dbReference type="InterPro" id="IPR035639">
    <property type="entry name" value="CPSF2_MBL"/>
</dbReference>
<dbReference type="InterPro" id="IPR001279">
    <property type="entry name" value="Metallo-B-lactamas"/>
</dbReference>
<dbReference type="InterPro" id="IPR036866">
    <property type="entry name" value="RibonucZ/Hydroxyglut_hydro"/>
</dbReference>
<dbReference type="InterPro" id="IPR011108">
    <property type="entry name" value="RMMBL"/>
</dbReference>
<dbReference type="PANTHER" id="PTHR45922">
    <property type="entry name" value="CLEAVAGE AND POLYADENYLATION SPECIFICITY FACTOR SUBUNIT 2"/>
    <property type="match status" value="1"/>
</dbReference>
<dbReference type="PANTHER" id="PTHR45922:SF1">
    <property type="entry name" value="CLEAVAGE AND POLYADENYLATION SPECIFICITY FACTOR SUBUNIT 2"/>
    <property type="match status" value="1"/>
</dbReference>
<dbReference type="Pfam" id="PF10996">
    <property type="entry name" value="Beta-Casp"/>
    <property type="match status" value="1"/>
</dbReference>
<dbReference type="Pfam" id="PF13299">
    <property type="entry name" value="CPSF100_C"/>
    <property type="match status" value="1"/>
</dbReference>
<dbReference type="Pfam" id="PF16661">
    <property type="entry name" value="Lactamase_B_6"/>
    <property type="match status" value="1"/>
</dbReference>
<dbReference type="Pfam" id="PF07521">
    <property type="entry name" value="RMMBL"/>
    <property type="match status" value="1"/>
</dbReference>
<dbReference type="SMART" id="SM01027">
    <property type="entry name" value="Beta-Casp"/>
    <property type="match status" value="1"/>
</dbReference>
<dbReference type="SMART" id="SM00849">
    <property type="entry name" value="Lactamase_B"/>
    <property type="match status" value="1"/>
</dbReference>
<dbReference type="SUPFAM" id="SSF56281">
    <property type="entry name" value="Metallo-hydrolase/oxidoreductase"/>
    <property type="match status" value="1"/>
</dbReference>
<feature type="chain" id="PRO_0000074396" description="Probable cleavage and polyadenylation specificity factor subunit 2">
    <location>
        <begin position="1"/>
        <end position="843"/>
    </location>
</feature>
<feature type="region of interest" description="Disordered" evidence="2">
    <location>
        <begin position="414"/>
        <end position="443"/>
    </location>
</feature>
<feature type="region of interest" description="Disordered" evidence="2">
    <location>
        <begin position="691"/>
        <end position="753"/>
    </location>
</feature>
<feature type="compositionally biased region" description="Basic and acidic residues" evidence="2">
    <location>
        <begin position="414"/>
        <end position="425"/>
    </location>
</feature>
<feature type="compositionally biased region" description="Acidic residues" evidence="2">
    <location>
        <begin position="432"/>
        <end position="441"/>
    </location>
</feature>
<feature type="compositionally biased region" description="Basic and acidic residues" evidence="2">
    <location>
        <begin position="732"/>
        <end position="746"/>
    </location>
</feature>